<gene>
    <name evidence="1" type="primary">cyaY</name>
    <name type="ordered locus">CKO_00149</name>
</gene>
<name>CYAY_CITK8</name>
<feature type="chain" id="PRO_1000010925" description="Iron-sulfur cluster assembly protein CyaY">
    <location>
        <begin position="1"/>
        <end position="106"/>
    </location>
</feature>
<evidence type="ECO:0000255" key="1">
    <source>
        <dbReference type="HAMAP-Rule" id="MF_00142"/>
    </source>
</evidence>
<accession>A8ACV5</accession>
<keyword id="KW-0408">Iron</keyword>
<keyword id="KW-0479">Metal-binding</keyword>
<keyword id="KW-1185">Reference proteome</keyword>
<protein>
    <recommendedName>
        <fullName evidence="1">Iron-sulfur cluster assembly protein CyaY</fullName>
    </recommendedName>
</protein>
<sequence>MNDSEFHRLTDTLWMTIEERLDDWDGDSDIDCEINGGVLTITFENGSKIIINRQEPLHQVWLATKQGGYHFDLKGDEWICDRSGETFWDLLEQAATQQAGEAVSFR</sequence>
<organism>
    <name type="scientific">Citrobacter koseri (strain ATCC BAA-895 / CDC 4225-83 / SGSC4696)</name>
    <dbReference type="NCBI Taxonomy" id="290338"/>
    <lineage>
        <taxon>Bacteria</taxon>
        <taxon>Pseudomonadati</taxon>
        <taxon>Pseudomonadota</taxon>
        <taxon>Gammaproteobacteria</taxon>
        <taxon>Enterobacterales</taxon>
        <taxon>Enterobacteriaceae</taxon>
        <taxon>Citrobacter</taxon>
    </lineage>
</organism>
<dbReference type="EMBL" id="CP000822">
    <property type="protein sequence ID" value="ABV11318.1"/>
    <property type="molecule type" value="Genomic_DNA"/>
</dbReference>
<dbReference type="RefSeq" id="WP_012131152.1">
    <property type="nucleotide sequence ID" value="NC_009792.1"/>
</dbReference>
<dbReference type="SMR" id="A8ACV5"/>
<dbReference type="STRING" id="290338.CKO_00149"/>
<dbReference type="GeneID" id="45134445"/>
<dbReference type="KEGG" id="cko:CKO_00149"/>
<dbReference type="HOGENOM" id="CLU_080880_3_0_6"/>
<dbReference type="OrthoDB" id="285675at2"/>
<dbReference type="Proteomes" id="UP000008148">
    <property type="component" value="Chromosome"/>
</dbReference>
<dbReference type="GO" id="GO:0005829">
    <property type="term" value="C:cytosol"/>
    <property type="evidence" value="ECO:0007669"/>
    <property type="project" value="TreeGrafter"/>
</dbReference>
<dbReference type="GO" id="GO:0008199">
    <property type="term" value="F:ferric iron binding"/>
    <property type="evidence" value="ECO:0007669"/>
    <property type="project" value="InterPro"/>
</dbReference>
<dbReference type="GO" id="GO:0008198">
    <property type="term" value="F:ferrous iron binding"/>
    <property type="evidence" value="ECO:0007669"/>
    <property type="project" value="TreeGrafter"/>
</dbReference>
<dbReference type="GO" id="GO:0016226">
    <property type="term" value="P:iron-sulfur cluster assembly"/>
    <property type="evidence" value="ECO:0007669"/>
    <property type="project" value="UniProtKB-UniRule"/>
</dbReference>
<dbReference type="CDD" id="cd00503">
    <property type="entry name" value="Frataxin"/>
    <property type="match status" value="1"/>
</dbReference>
<dbReference type="FunFam" id="3.30.920.10:FF:000001">
    <property type="entry name" value="Iron-sulfur cluster assembly protein CyaY"/>
    <property type="match status" value="1"/>
</dbReference>
<dbReference type="Gene3D" id="3.30.920.10">
    <property type="entry name" value="Frataxin/CyaY"/>
    <property type="match status" value="1"/>
</dbReference>
<dbReference type="HAMAP" id="MF_00142">
    <property type="entry name" value="CyaY"/>
    <property type="match status" value="1"/>
</dbReference>
<dbReference type="InterPro" id="IPR047584">
    <property type="entry name" value="CyaY"/>
</dbReference>
<dbReference type="InterPro" id="IPR002908">
    <property type="entry name" value="Frataxin/CyaY"/>
</dbReference>
<dbReference type="InterPro" id="IPR036524">
    <property type="entry name" value="Frataxin/CyaY_sf"/>
</dbReference>
<dbReference type="InterPro" id="IPR020895">
    <property type="entry name" value="Frataxin_CS"/>
</dbReference>
<dbReference type="NCBIfam" id="TIGR03421">
    <property type="entry name" value="FeS_CyaY"/>
    <property type="match status" value="1"/>
</dbReference>
<dbReference type="PANTHER" id="PTHR16821">
    <property type="entry name" value="FRATAXIN"/>
    <property type="match status" value="1"/>
</dbReference>
<dbReference type="PANTHER" id="PTHR16821:SF2">
    <property type="entry name" value="FRATAXIN, MITOCHONDRIAL"/>
    <property type="match status" value="1"/>
</dbReference>
<dbReference type="Pfam" id="PF01491">
    <property type="entry name" value="Frataxin_Cyay"/>
    <property type="match status" value="1"/>
</dbReference>
<dbReference type="SMART" id="SM01219">
    <property type="entry name" value="Frataxin_Cyay"/>
    <property type="match status" value="1"/>
</dbReference>
<dbReference type="SUPFAM" id="SSF55387">
    <property type="entry name" value="Frataxin/Nqo15-like"/>
    <property type="match status" value="1"/>
</dbReference>
<dbReference type="PROSITE" id="PS01344">
    <property type="entry name" value="FRATAXIN_1"/>
    <property type="match status" value="1"/>
</dbReference>
<dbReference type="PROSITE" id="PS50810">
    <property type="entry name" value="FRATAXIN_2"/>
    <property type="match status" value="1"/>
</dbReference>
<proteinExistence type="inferred from homology"/>
<reference key="1">
    <citation type="submission" date="2007-08" db="EMBL/GenBank/DDBJ databases">
        <authorList>
            <consortium name="The Citrobacter koseri Genome Sequencing Project"/>
            <person name="McClelland M."/>
            <person name="Sanderson E.K."/>
            <person name="Porwollik S."/>
            <person name="Spieth J."/>
            <person name="Clifton W.S."/>
            <person name="Latreille P."/>
            <person name="Courtney L."/>
            <person name="Wang C."/>
            <person name="Pepin K."/>
            <person name="Bhonagiri V."/>
            <person name="Nash W."/>
            <person name="Johnson M."/>
            <person name="Thiruvilangam P."/>
            <person name="Wilson R."/>
        </authorList>
    </citation>
    <scope>NUCLEOTIDE SEQUENCE [LARGE SCALE GENOMIC DNA]</scope>
    <source>
        <strain>ATCC BAA-895 / CDC 4225-83 / SGSC4696</strain>
    </source>
</reference>
<comment type="function">
    <text evidence="1">Involved in iron-sulfur (Fe-S) cluster assembly. May act as a regulator of Fe-S biogenesis.</text>
</comment>
<comment type="similarity">
    <text evidence="1">Belongs to the frataxin family.</text>
</comment>